<gene>
    <name type="ordered locus">SAS1405</name>
</gene>
<dbReference type="EMBL" id="BX571857">
    <property type="protein sequence ID" value="CAG43181.1"/>
    <property type="molecule type" value="Genomic_DNA"/>
</dbReference>
<dbReference type="RefSeq" id="WP_000005212.1">
    <property type="nucleotide sequence ID" value="NC_002953.3"/>
</dbReference>
<dbReference type="SMR" id="Q6G9A0"/>
<dbReference type="KEGG" id="sas:SAS1405"/>
<dbReference type="HOGENOM" id="CLU_122408_0_0_9"/>
<dbReference type="Gene3D" id="3.40.1530.30">
    <property type="entry name" value="Uncharacterised family UPF0302, N-terminal domain"/>
    <property type="match status" value="1"/>
</dbReference>
<dbReference type="HAMAP" id="MF_00760">
    <property type="entry name" value="UPF0302"/>
    <property type="match status" value="1"/>
</dbReference>
<dbReference type="InterPro" id="IPR014957">
    <property type="entry name" value="IDEAL_dom"/>
</dbReference>
<dbReference type="InterPro" id="IPR011188">
    <property type="entry name" value="UPF0302"/>
</dbReference>
<dbReference type="InterPro" id="IPR014963">
    <property type="entry name" value="UPF0302_N"/>
</dbReference>
<dbReference type="InterPro" id="IPR038091">
    <property type="entry name" value="UPF0302_N_sf"/>
</dbReference>
<dbReference type="Pfam" id="PF08858">
    <property type="entry name" value="IDEAL"/>
    <property type="match status" value="1"/>
</dbReference>
<dbReference type="Pfam" id="PF08864">
    <property type="entry name" value="UPF0302"/>
    <property type="match status" value="1"/>
</dbReference>
<dbReference type="PIRSF" id="PIRSF007165">
    <property type="entry name" value="UCP007165"/>
    <property type="match status" value="1"/>
</dbReference>
<dbReference type="SMART" id="SM00914">
    <property type="entry name" value="IDEAL"/>
    <property type="match status" value="1"/>
</dbReference>
<evidence type="ECO:0000255" key="1">
    <source>
        <dbReference type="HAMAP-Rule" id="MF_00760"/>
    </source>
</evidence>
<proteinExistence type="inferred from homology"/>
<feature type="chain" id="PRO_0000216108" description="UPF0302 protein SAS1405">
    <location>
        <begin position="1"/>
        <end position="191"/>
    </location>
</feature>
<accession>Q6G9A0</accession>
<comment type="similarity">
    <text evidence="1">Belongs to the UPF0302 family.</text>
</comment>
<reference key="1">
    <citation type="journal article" date="2004" name="Proc. Natl. Acad. Sci. U.S.A.">
        <title>Complete genomes of two clinical Staphylococcus aureus strains: evidence for the rapid evolution of virulence and drug resistance.</title>
        <authorList>
            <person name="Holden M.T.G."/>
            <person name="Feil E.J."/>
            <person name="Lindsay J.A."/>
            <person name="Peacock S.J."/>
            <person name="Day N.P.J."/>
            <person name="Enright M.C."/>
            <person name="Foster T.J."/>
            <person name="Moore C.E."/>
            <person name="Hurst L."/>
            <person name="Atkin R."/>
            <person name="Barron A."/>
            <person name="Bason N."/>
            <person name="Bentley S.D."/>
            <person name="Chillingworth C."/>
            <person name="Chillingworth T."/>
            <person name="Churcher C."/>
            <person name="Clark L."/>
            <person name="Corton C."/>
            <person name="Cronin A."/>
            <person name="Doggett J."/>
            <person name="Dowd L."/>
            <person name="Feltwell T."/>
            <person name="Hance Z."/>
            <person name="Harris B."/>
            <person name="Hauser H."/>
            <person name="Holroyd S."/>
            <person name="Jagels K."/>
            <person name="James K.D."/>
            <person name="Lennard N."/>
            <person name="Line A."/>
            <person name="Mayes R."/>
            <person name="Moule S."/>
            <person name="Mungall K."/>
            <person name="Ormond D."/>
            <person name="Quail M.A."/>
            <person name="Rabbinowitsch E."/>
            <person name="Rutherford K.M."/>
            <person name="Sanders M."/>
            <person name="Sharp S."/>
            <person name="Simmonds M."/>
            <person name="Stevens K."/>
            <person name="Whitehead S."/>
            <person name="Barrell B.G."/>
            <person name="Spratt B.G."/>
            <person name="Parkhill J."/>
        </authorList>
    </citation>
    <scope>NUCLEOTIDE SEQUENCE [LARGE SCALE GENOMIC DNA]</scope>
    <source>
        <strain>MSSA476</strain>
    </source>
</reference>
<name>Y1405_STAAS</name>
<sequence>MSETLNQIKESFIEYLLFQYRFKSRIAVWVLNYIKVNEAKLANIHFVDTKINHHETLEIAEVGSHASAIQFTKRNIKLMNTNEIFDYIANHNCAFDIQIHFANVSKREQRLDDLIVAQLTESPSYQTYLHDLNSMAIDRHKHALLIDYLLHNIDLSLQMNEKQRFYQLTQILNTLKLVNKHNQFEDLADDD</sequence>
<organism>
    <name type="scientific">Staphylococcus aureus (strain MSSA476)</name>
    <dbReference type="NCBI Taxonomy" id="282459"/>
    <lineage>
        <taxon>Bacteria</taxon>
        <taxon>Bacillati</taxon>
        <taxon>Bacillota</taxon>
        <taxon>Bacilli</taxon>
        <taxon>Bacillales</taxon>
        <taxon>Staphylococcaceae</taxon>
        <taxon>Staphylococcus</taxon>
    </lineage>
</organism>
<protein>
    <recommendedName>
        <fullName evidence="1">UPF0302 protein SAS1405</fullName>
    </recommendedName>
</protein>